<feature type="chain" id="PRO_1000204395" description="Adenylate kinase">
    <location>
        <begin position="1"/>
        <end position="195"/>
    </location>
</feature>
<feature type="binding site" evidence="1">
    <location>
        <begin position="8"/>
        <end position="16"/>
    </location>
    <ligand>
        <name>ATP</name>
        <dbReference type="ChEBI" id="CHEBI:30616"/>
    </ligand>
</feature>
<reference key="1">
    <citation type="journal article" date="2009" name="Proc. Natl. Acad. Sci. U.S.A.">
        <title>Biogeography of the Sulfolobus islandicus pan-genome.</title>
        <authorList>
            <person name="Reno M.L."/>
            <person name="Held N.L."/>
            <person name="Fields C.J."/>
            <person name="Burke P.V."/>
            <person name="Whitaker R.J."/>
        </authorList>
    </citation>
    <scope>NUCLEOTIDE SEQUENCE [LARGE SCALE GENOMIC DNA]</scope>
    <source>
        <strain>Y.G.57.14 / Yellowstone #1</strain>
    </source>
</reference>
<name>KADA_SACI7</name>
<accession>C3NEG7</accession>
<dbReference type="EC" id="2.7.4.3" evidence="1"/>
<dbReference type="EMBL" id="CP001403">
    <property type="protein sequence ID" value="ACP45706.1"/>
    <property type="molecule type" value="Genomic_DNA"/>
</dbReference>
<dbReference type="RefSeq" id="WP_012711442.1">
    <property type="nucleotide sequence ID" value="NC_012622.1"/>
</dbReference>
<dbReference type="SMR" id="C3NEG7"/>
<dbReference type="KEGG" id="siy:YG5714_1439"/>
<dbReference type="HOGENOM" id="CLU_119371_0_0_2"/>
<dbReference type="Proteomes" id="UP000002308">
    <property type="component" value="Chromosome"/>
</dbReference>
<dbReference type="GO" id="GO:0005737">
    <property type="term" value="C:cytoplasm"/>
    <property type="evidence" value="ECO:0007669"/>
    <property type="project" value="UniProtKB-SubCell"/>
</dbReference>
<dbReference type="GO" id="GO:0004017">
    <property type="term" value="F:adenylate kinase activity"/>
    <property type="evidence" value="ECO:0007669"/>
    <property type="project" value="UniProtKB-UniRule"/>
</dbReference>
<dbReference type="GO" id="GO:0005524">
    <property type="term" value="F:ATP binding"/>
    <property type="evidence" value="ECO:0007669"/>
    <property type="project" value="UniProtKB-UniRule"/>
</dbReference>
<dbReference type="Gene3D" id="3.40.50.300">
    <property type="entry name" value="P-loop containing nucleotide triphosphate hydrolases"/>
    <property type="match status" value="1"/>
</dbReference>
<dbReference type="HAMAP" id="MF_00234">
    <property type="entry name" value="Adenylate_kinase_AdkA"/>
    <property type="match status" value="1"/>
</dbReference>
<dbReference type="InterPro" id="IPR023477">
    <property type="entry name" value="Adenylate_kinase_AdkA"/>
</dbReference>
<dbReference type="InterPro" id="IPR027417">
    <property type="entry name" value="P-loop_NTPase"/>
</dbReference>
<dbReference type="NCBIfam" id="NF003122">
    <property type="entry name" value="PRK04040.1"/>
    <property type="match status" value="1"/>
</dbReference>
<dbReference type="Pfam" id="PF13207">
    <property type="entry name" value="AAA_17"/>
    <property type="match status" value="1"/>
</dbReference>
<dbReference type="SUPFAM" id="SSF52540">
    <property type="entry name" value="P-loop containing nucleoside triphosphate hydrolases"/>
    <property type="match status" value="1"/>
</dbReference>
<comment type="catalytic activity">
    <reaction evidence="1">
        <text>AMP + ATP = 2 ADP</text>
        <dbReference type="Rhea" id="RHEA:12973"/>
        <dbReference type="ChEBI" id="CHEBI:30616"/>
        <dbReference type="ChEBI" id="CHEBI:456215"/>
        <dbReference type="ChEBI" id="CHEBI:456216"/>
        <dbReference type="EC" id="2.7.4.3"/>
    </reaction>
</comment>
<comment type="subcellular location">
    <subcellularLocation>
        <location evidence="1">Cytoplasm</location>
    </subcellularLocation>
</comment>
<comment type="similarity">
    <text evidence="1">Belongs to the archaeal adenylate kinase family.</text>
</comment>
<organism>
    <name type="scientific">Saccharolobus islandicus (strain Y.G.57.14 / Yellowstone #1)</name>
    <name type="common">Sulfolobus islandicus</name>
    <dbReference type="NCBI Taxonomy" id="439386"/>
    <lineage>
        <taxon>Archaea</taxon>
        <taxon>Thermoproteota</taxon>
        <taxon>Thermoprotei</taxon>
        <taxon>Sulfolobales</taxon>
        <taxon>Sulfolobaceae</taxon>
        <taxon>Saccharolobus</taxon>
    </lineage>
</organism>
<sequence>MKIGIVTGIPGVGKTTVLSFADKILTEKGIPHKIANYGDYMLNTALKEGYVNSRDEIRKLQIEKQRELQALAARRIVEDLSLLGDEGIGLIDTHAVIRTPAGYLPGLPRHVIEVLSPKVIFLLEADPRIILERQKRDNSRARADYSDTTVINEVIQFARYSAMASAVLVGASVKVVINQEGDPSIAASDIINSLM</sequence>
<keyword id="KW-0067">ATP-binding</keyword>
<keyword id="KW-0963">Cytoplasm</keyword>
<keyword id="KW-0418">Kinase</keyword>
<keyword id="KW-0547">Nucleotide-binding</keyword>
<keyword id="KW-0808">Transferase</keyword>
<protein>
    <recommendedName>
        <fullName evidence="1">Adenylate kinase</fullName>
        <shortName evidence="1">AK</shortName>
        <ecNumber evidence="1">2.7.4.3</ecNumber>
    </recommendedName>
    <alternativeName>
        <fullName evidence="1">ATP-AMP transphosphorylase</fullName>
    </alternativeName>
</protein>
<proteinExistence type="inferred from homology"/>
<evidence type="ECO:0000255" key="1">
    <source>
        <dbReference type="HAMAP-Rule" id="MF_00234"/>
    </source>
</evidence>
<gene>
    <name evidence="1" type="primary">adkA</name>
    <name type="ordered locus">YG5714_1439</name>
</gene>